<sequence>MFTRVANFCRKVLSREESEAEQAVARPHMTIIPREQHAISRKDISENALKVLYRLNKAGYEAYLVGGGVRDLLLGKKPKDFDVTTNATPDQVRKLFRNCRLVGRRFRLAHVMFGPEIIEVATFRGHHEGSESDRTTSQRGQNGMLLRDNIFGSIEEDAQRRDFTINSLYYSVADFTVRDYVGGMQDLQEGVIRLIGNPETRYREDPVRMLRAVRFAAKLNMHISPETAEPIPRLATLLNDIPPARLFEESLKLLQAGNGYETYQQLREYHLFQPLFPTITRYFTENGDSAMERIIAQVLKNTDNRIRNEMRVNPAFLFAAMFWYPLLEMAQKIAQESGLAYYDAFALAMNDVLDEACRSLAIPKRLTTLTRDIWQLQLRMSRRQGKRAWKLMEHPKFRAAFDLLELRAQVENNTELQRLAQWWAEFQASAPPEQKGMLNELDDDPAPRRRRSRPRKRAPRREGTV</sequence>
<accession>Q8ZRQ8</accession>
<feature type="chain" id="PRO_0000139095" description="Poly(A) polymerase I">
    <location>
        <begin position="1"/>
        <end position="465"/>
    </location>
</feature>
<feature type="region of interest" description="Disordered" evidence="2">
    <location>
        <begin position="430"/>
        <end position="465"/>
    </location>
</feature>
<feature type="compositionally biased region" description="Basic residues" evidence="2">
    <location>
        <begin position="448"/>
        <end position="459"/>
    </location>
</feature>
<feature type="active site" evidence="1">
    <location>
        <position position="80"/>
    </location>
</feature>
<feature type="active site" evidence="1">
    <location>
        <position position="82"/>
    </location>
</feature>
<feature type="active site" evidence="1">
    <location>
        <position position="162"/>
    </location>
</feature>
<organism>
    <name type="scientific">Salmonella typhimurium (strain LT2 / SGSC1412 / ATCC 700720)</name>
    <dbReference type="NCBI Taxonomy" id="99287"/>
    <lineage>
        <taxon>Bacteria</taxon>
        <taxon>Pseudomonadati</taxon>
        <taxon>Pseudomonadota</taxon>
        <taxon>Gammaproteobacteria</taxon>
        <taxon>Enterobacterales</taxon>
        <taxon>Enterobacteriaceae</taxon>
        <taxon>Salmonella</taxon>
    </lineage>
</organism>
<protein>
    <recommendedName>
        <fullName evidence="1">Poly(A) polymerase I</fullName>
        <shortName evidence="1">PAP I</shortName>
        <ecNumber evidence="1">2.7.7.19</ecNumber>
    </recommendedName>
</protein>
<dbReference type="EC" id="2.7.7.19" evidence="1"/>
<dbReference type="EMBL" id="AE006468">
    <property type="protein sequence ID" value="AAL19148.1"/>
    <property type="status" value="ALT_INIT"/>
    <property type="molecule type" value="Genomic_DNA"/>
</dbReference>
<dbReference type="RefSeq" id="NP_459189.1">
    <property type="nucleotide sequence ID" value="NC_003197.2"/>
</dbReference>
<dbReference type="RefSeq" id="WP_000174614.1">
    <property type="nucleotide sequence ID" value="NC_003197.2"/>
</dbReference>
<dbReference type="SMR" id="Q8ZRQ8"/>
<dbReference type="STRING" id="99287.STM0184"/>
<dbReference type="PaxDb" id="99287-STM0184"/>
<dbReference type="GeneID" id="1251702"/>
<dbReference type="KEGG" id="stm:STM0184"/>
<dbReference type="PATRIC" id="fig|99287.12.peg.194"/>
<dbReference type="HOGENOM" id="CLU_015961_0_0_6"/>
<dbReference type="PhylomeDB" id="Q8ZRQ8"/>
<dbReference type="Proteomes" id="UP000001014">
    <property type="component" value="Chromosome"/>
</dbReference>
<dbReference type="GO" id="GO:0005524">
    <property type="term" value="F:ATP binding"/>
    <property type="evidence" value="ECO:0007669"/>
    <property type="project" value="UniProtKB-UniRule"/>
</dbReference>
<dbReference type="GO" id="GO:1990817">
    <property type="term" value="F:poly(A) RNA polymerase activity"/>
    <property type="evidence" value="ECO:0007669"/>
    <property type="project" value="UniProtKB-UniRule"/>
</dbReference>
<dbReference type="GO" id="GO:0003723">
    <property type="term" value="F:RNA binding"/>
    <property type="evidence" value="ECO:0007669"/>
    <property type="project" value="UniProtKB-UniRule"/>
</dbReference>
<dbReference type="GO" id="GO:0006397">
    <property type="term" value="P:mRNA processing"/>
    <property type="evidence" value="ECO:0007669"/>
    <property type="project" value="UniProtKB-KW"/>
</dbReference>
<dbReference type="GO" id="GO:0043633">
    <property type="term" value="P:polyadenylation-dependent RNA catabolic process"/>
    <property type="evidence" value="ECO:0007669"/>
    <property type="project" value="InterPro"/>
</dbReference>
<dbReference type="CDD" id="cd05398">
    <property type="entry name" value="NT_ClassII-CCAase"/>
    <property type="match status" value="1"/>
</dbReference>
<dbReference type="FunFam" id="1.10.3090.10:FF:000003">
    <property type="entry name" value="Poly(A) polymerase I"/>
    <property type="match status" value="1"/>
</dbReference>
<dbReference type="FunFam" id="3.30.460.10:FF:000035">
    <property type="entry name" value="Poly(A) polymerase I"/>
    <property type="match status" value="1"/>
</dbReference>
<dbReference type="Gene3D" id="3.30.460.10">
    <property type="entry name" value="Beta Polymerase, domain 2"/>
    <property type="match status" value="1"/>
</dbReference>
<dbReference type="Gene3D" id="1.10.3090.10">
    <property type="entry name" value="cca-adding enzyme, domain 2"/>
    <property type="match status" value="1"/>
</dbReference>
<dbReference type="HAMAP" id="MF_00957">
    <property type="entry name" value="PolyA_pol"/>
    <property type="match status" value="1"/>
</dbReference>
<dbReference type="InterPro" id="IPR043519">
    <property type="entry name" value="NT_sf"/>
</dbReference>
<dbReference type="InterPro" id="IPR002646">
    <property type="entry name" value="PolA_pol_head_dom"/>
</dbReference>
<dbReference type="InterPro" id="IPR010206">
    <property type="entry name" value="PolA_pol_I"/>
</dbReference>
<dbReference type="InterPro" id="IPR025866">
    <property type="entry name" value="PolyA_pol_arg_C_dom"/>
</dbReference>
<dbReference type="InterPro" id="IPR032828">
    <property type="entry name" value="PolyA_RNA-bd"/>
</dbReference>
<dbReference type="InterPro" id="IPR052191">
    <property type="entry name" value="tRNA_ntf/polyA_polymerase_I"/>
</dbReference>
<dbReference type="NCBIfam" id="TIGR01942">
    <property type="entry name" value="pcnB"/>
    <property type="match status" value="1"/>
</dbReference>
<dbReference type="NCBIfam" id="NF008634">
    <property type="entry name" value="PRK11623.1"/>
    <property type="match status" value="1"/>
</dbReference>
<dbReference type="PANTHER" id="PTHR43051">
    <property type="entry name" value="POLYNUCLEOTIDE ADENYLYLTRANSFERASE FAMILY PROTEIN"/>
    <property type="match status" value="1"/>
</dbReference>
<dbReference type="PANTHER" id="PTHR43051:SF1">
    <property type="entry name" value="POLYNUCLEOTIDE ADENYLYLTRANSFERASE FAMILY PROTEIN"/>
    <property type="match status" value="1"/>
</dbReference>
<dbReference type="Pfam" id="PF01743">
    <property type="entry name" value="PolyA_pol"/>
    <property type="match status" value="1"/>
</dbReference>
<dbReference type="Pfam" id="PF12626">
    <property type="entry name" value="PolyA_pol_arg_C"/>
    <property type="match status" value="1"/>
</dbReference>
<dbReference type="Pfam" id="PF12627">
    <property type="entry name" value="PolyA_pol_RNAbd"/>
    <property type="match status" value="1"/>
</dbReference>
<dbReference type="SUPFAM" id="SSF81301">
    <property type="entry name" value="Nucleotidyltransferase"/>
    <property type="match status" value="1"/>
</dbReference>
<dbReference type="SUPFAM" id="SSF81891">
    <property type="entry name" value="Poly A polymerase C-terminal region-like"/>
    <property type="match status" value="1"/>
</dbReference>
<proteinExistence type="inferred from homology"/>
<name>PCNB_SALTY</name>
<comment type="function">
    <text evidence="1">Adds poly(A) tail to the 3' end of many RNAs, which usually targets these RNAs for decay. Plays a significant role in the global control of gene expression, through influencing the rate of transcript degradation, and in the general RNA quality control.</text>
</comment>
<comment type="catalytic activity">
    <reaction evidence="1">
        <text>RNA(n) + ATP = RNA(n)-3'-adenine ribonucleotide + diphosphate</text>
        <dbReference type="Rhea" id="RHEA:11332"/>
        <dbReference type="Rhea" id="RHEA-COMP:14527"/>
        <dbReference type="Rhea" id="RHEA-COMP:17347"/>
        <dbReference type="ChEBI" id="CHEBI:30616"/>
        <dbReference type="ChEBI" id="CHEBI:33019"/>
        <dbReference type="ChEBI" id="CHEBI:140395"/>
        <dbReference type="ChEBI" id="CHEBI:173115"/>
        <dbReference type="EC" id="2.7.7.19"/>
    </reaction>
</comment>
<comment type="similarity">
    <text evidence="1">Belongs to the tRNA nucleotidyltransferase/poly(A) polymerase family.</text>
</comment>
<comment type="sequence caution" evidence="3">
    <conflict type="erroneous initiation">
        <sequence resource="EMBL-CDS" id="AAL19148"/>
    </conflict>
    <text>Extended N-terminus.</text>
</comment>
<keyword id="KW-0067">ATP-binding</keyword>
<keyword id="KW-0507">mRNA processing</keyword>
<keyword id="KW-0547">Nucleotide-binding</keyword>
<keyword id="KW-1185">Reference proteome</keyword>
<keyword id="KW-0694">RNA-binding</keyword>
<keyword id="KW-0804">Transcription</keyword>
<keyword id="KW-0808">Transferase</keyword>
<reference key="1">
    <citation type="journal article" date="2001" name="Nature">
        <title>Complete genome sequence of Salmonella enterica serovar Typhimurium LT2.</title>
        <authorList>
            <person name="McClelland M."/>
            <person name="Sanderson K.E."/>
            <person name="Spieth J."/>
            <person name="Clifton S.W."/>
            <person name="Latreille P."/>
            <person name="Courtney L."/>
            <person name="Porwollik S."/>
            <person name="Ali J."/>
            <person name="Dante M."/>
            <person name="Du F."/>
            <person name="Hou S."/>
            <person name="Layman D."/>
            <person name="Leonard S."/>
            <person name="Nguyen C."/>
            <person name="Scott K."/>
            <person name="Holmes A."/>
            <person name="Grewal N."/>
            <person name="Mulvaney E."/>
            <person name="Ryan E."/>
            <person name="Sun H."/>
            <person name="Florea L."/>
            <person name="Miller W."/>
            <person name="Stoneking T."/>
            <person name="Nhan M."/>
            <person name="Waterston R."/>
            <person name="Wilson R.K."/>
        </authorList>
    </citation>
    <scope>NUCLEOTIDE SEQUENCE [LARGE SCALE GENOMIC DNA]</scope>
    <source>
        <strain>LT2 / SGSC1412 / ATCC 700720</strain>
    </source>
</reference>
<gene>
    <name evidence="1" type="primary">pcnB</name>
    <name type="ordered locus">STM0184</name>
</gene>
<evidence type="ECO:0000255" key="1">
    <source>
        <dbReference type="HAMAP-Rule" id="MF_00957"/>
    </source>
</evidence>
<evidence type="ECO:0000256" key="2">
    <source>
        <dbReference type="SAM" id="MobiDB-lite"/>
    </source>
</evidence>
<evidence type="ECO:0000305" key="3"/>